<gene>
    <name evidence="1 3" type="primary">metXA</name>
    <name evidence="4" type="synonym">metX</name>
    <name evidence="4" type="ordered locus">NAMH_0891</name>
</gene>
<organism>
    <name type="scientific">Nautilia profundicola (strain ATCC BAA-1463 / DSM 18972 / AmH)</name>
    <dbReference type="NCBI Taxonomy" id="598659"/>
    <lineage>
        <taxon>Bacteria</taxon>
        <taxon>Pseudomonadati</taxon>
        <taxon>Campylobacterota</taxon>
        <taxon>Epsilonproteobacteria</taxon>
        <taxon>Nautiliales</taxon>
        <taxon>Nautiliaceae</taxon>
        <taxon>Nautilia</taxon>
    </lineage>
</organism>
<accession>B9L9I6</accession>
<keyword id="KW-0012">Acyltransferase</keyword>
<keyword id="KW-0028">Amino-acid biosynthesis</keyword>
<keyword id="KW-0963">Cytoplasm</keyword>
<keyword id="KW-0486">Methionine biosynthesis</keyword>
<keyword id="KW-0808">Transferase</keyword>
<comment type="function">
    <text evidence="1 2">Transfers an acetyl group from acetyl-CoA to L-homoserine, forming acetyl-L-homoserine.</text>
</comment>
<comment type="catalytic activity">
    <reaction evidence="1 2">
        <text>L-homoserine + acetyl-CoA = O-acetyl-L-homoserine + CoA</text>
        <dbReference type="Rhea" id="RHEA:13701"/>
        <dbReference type="ChEBI" id="CHEBI:57287"/>
        <dbReference type="ChEBI" id="CHEBI:57288"/>
        <dbReference type="ChEBI" id="CHEBI:57476"/>
        <dbReference type="ChEBI" id="CHEBI:57716"/>
        <dbReference type="EC" id="2.3.1.31"/>
    </reaction>
</comment>
<comment type="pathway">
    <text evidence="1">Amino-acid biosynthesis; L-methionine biosynthesis via de novo pathway; O-acetyl-L-homoserine from L-homoserine: step 1/1.</text>
</comment>
<comment type="subunit">
    <text evidence="1">Homodimer.</text>
</comment>
<comment type="subcellular location">
    <subcellularLocation>
        <location evidence="1">Cytoplasm</location>
    </subcellularLocation>
</comment>
<comment type="similarity">
    <text evidence="1">Belongs to the AB hydrolase superfamily. MetX family.</text>
</comment>
<protein>
    <recommendedName>
        <fullName evidence="1">Homoserine O-acetyltransferase</fullName>
        <shortName evidence="1 3">HAT</shortName>
        <ecNumber evidence="1 2">2.3.1.31</ecNumber>
    </recommendedName>
    <alternativeName>
        <fullName evidence="1">Homoserine transacetylase</fullName>
        <shortName evidence="1">HTA</shortName>
    </alternativeName>
</protein>
<dbReference type="EC" id="2.3.1.31" evidence="1 2"/>
<dbReference type="EMBL" id="CP001279">
    <property type="protein sequence ID" value="ACM92473.1"/>
    <property type="molecule type" value="Genomic_DNA"/>
</dbReference>
<dbReference type="RefSeq" id="WP_012663844.1">
    <property type="nucleotide sequence ID" value="NC_012115.1"/>
</dbReference>
<dbReference type="SMR" id="B9L9I6"/>
<dbReference type="STRING" id="598659.NAMH_0891"/>
<dbReference type="ESTHER" id="naupa-metxa">
    <property type="family name" value="Homoserine_transacetylase"/>
</dbReference>
<dbReference type="KEGG" id="nam:NAMH_0891"/>
<dbReference type="eggNOG" id="COG2021">
    <property type="taxonomic scope" value="Bacteria"/>
</dbReference>
<dbReference type="HOGENOM" id="CLU_028760_1_2_7"/>
<dbReference type="OrthoDB" id="9800754at2"/>
<dbReference type="UniPathway" id="UPA00051">
    <property type="reaction ID" value="UER00074"/>
</dbReference>
<dbReference type="Proteomes" id="UP000000448">
    <property type="component" value="Chromosome"/>
</dbReference>
<dbReference type="GO" id="GO:0005737">
    <property type="term" value="C:cytoplasm"/>
    <property type="evidence" value="ECO:0007669"/>
    <property type="project" value="UniProtKB-SubCell"/>
</dbReference>
<dbReference type="GO" id="GO:0004414">
    <property type="term" value="F:homoserine O-acetyltransferase activity"/>
    <property type="evidence" value="ECO:0007669"/>
    <property type="project" value="UniProtKB-UniRule"/>
</dbReference>
<dbReference type="GO" id="GO:0009092">
    <property type="term" value="P:homoserine metabolic process"/>
    <property type="evidence" value="ECO:0007669"/>
    <property type="project" value="TreeGrafter"/>
</dbReference>
<dbReference type="GO" id="GO:0009086">
    <property type="term" value="P:methionine biosynthetic process"/>
    <property type="evidence" value="ECO:0007669"/>
    <property type="project" value="UniProtKB-UniRule"/>
</dbReference>
<dbReference type="Gene3D" id="1.10.1740.110">
    <property type="match status" value="1"/>
</dbReference>
<dbReference type="Gene3D" id="3.40.50.1820">
    <property type="entry name" value="alpha/beta hydrolase"/>
    <property type="match status" value="1"/>
</dbReference>
<dbReference type="HAMAP" id="MF_00296">
    <property type="entry name" value="MetX_acyltransf"/>
    <property type="match status" value="1"/>
</dbReference>
<dbReference type="InterPro" id="IPR000073">
    <property type="entry name" value="AB_hydrolase_1"/>
</dbReference>
<dbReference type="InterPro" id="IPR029058">
    <property type="entry name" value="AB_hydrolase_fold"/>
</dbReference>
<dbReference type="InterPro" id="IPR008220">
    <property type="entry name" value="HAT_MetX-like"/>
</dbReference>
<dbReference type="NCBIfam" id="TIGR01392">
    <property type="entry name" value="homoserO_Ac_trn"/>
    <property type="match status" value="1"/>
</dbReference>
<dbReference type="NCBIfam" id="NF001209">
    <property type="entry name" value="PRK00175.1"/>
    <property type="match status" value="1"/>
</dbReference>
<dbReference type="PANTHER" id="PTHR32268">
    <property type="entry name" value="HOMOSERINE O-ACETYLTRANSFERASE"/>
    <property type="match status" value="1"/>
</dbReference>
<dbReference type="PANTHER" id="PTHR32268:SF11">
    <property type="entry name" value="HOMOSERINE O-ACETYLTRANSFERASE"/>
    <property type="match status" value="1"/>
</dbReference>
<dbReference type="Pfam" id="PF00561">
    <property type="entry name" value="Abhydrolase_1"/>
    <property type="match status" value="1"/>
</dbReference>
<dbReference type="PIRSF" id="PIRSF000443">
    <property type="entry name" value="Homoser_Ac_trans"/>
    <property type="match status" value="1"/>
</dbReference>
<dbReference type="SUPFAM" id="SSF53474">
    <property type="entry name" value="alpha/beta-Hydrolases"/>
    <property type="match status" value="1"/>
</dbReference>
<name>METXA_NAUPA</name>
<feature type="chain" id="PRO_0000440296" description="Homoserine O-acetyltransferase">
    <location>
        <begin position="1"/>
        <end position="368"/>
    </location>
</feature>
<feature type="domain" description="AB hydrolase-1" evidence="1">
    <location>
        <begin position="41"/>
        <end position="352"/>
    </location>
</feature>
<feature type="active site" description="Nucleophile" evidence="1">
    <location>
        <position position="147"/>
    </location>
</feature>
<feature type="active site" evidence="1">
    <location>
        <position position="313"/>
    </location>
</feature>
<feature type="active site" evidence="1">
    <location>
        <position position="346"/>
    </location>
</feature>
<feature type="binding site" evidence="1">
    <location>
        <position position="219"/>
    </location>
    <ligand>
        <name>substrate</name>
    </ligand>
</feature>
<feature type="binding site" evidence="1">
    <location>
        <position position="347"/>
    </location>
    <ligand>
        <name>substrate</name>
    </ligand>
</feature>
<proteinExistence type="evidence at protein level"/>
<reference key="1">
    <citation type="journal article" date="2009" name="PLoS Genet.">
        <title>Adaptations to submarine hydrothermal environments exemplified by the genome of Nautilia profundicola.</title>
        <authorList>
            <person name="Campbell B.J."/>
            <person name="Smith J.L."/>
            <person name="Hanson T.E."/>
            <person name="Klotz M.G."/>
            <person name="Stein L.Y."/>
            <person name="Lee C.K."/>
            <person name="Wu D."/>
            <person name="Robinson J.M."/>
            <person name="Khouri H.M."/>
            <person name="Eisen J.A."/>
            <person name="Cary S.C."/>
        </authorList>
    </citation>
    <scope>NUCLEOTIDE SEQUENCE [LARGE SCALE GENOMIC DNA]</scope>
    <source>
        <strain>ATCC BAA-1463 / DSM 18972 / AmH</strain>
    </source>
</reference>
<reference key="2">
    <citation type="journal article" date="2017" name="Nat. Chem. Biol.">
        <title>Parallel evolution of non-homologous isofunctional enzymes in methionine biosynthesis.</title>
        <authorList>
            <person name="Bastard K."/>
            <person name="Perret A."/>
            <person name="Mariage A."/>
            <person name="Bessonnet T."/>
            <person name="Pinet-Turpault A."/>
            <person name="Petit J.L."/>
            <person name="Darii E."/>
            <person name="Bazire P."/>
            <person name="Vergne-Vaxelaire C."/>
            <person name="Brewee C."/>
            <person name="Debard A."/>
            <person name="Pellouin V."/>
            <person name="Besnard-Gonnet M."/>
            <person name="Artiguenave F."/>
            <person name="Medigue C."/>
            <person name="Vallenet D."/>
            <person name="Danchin A."/>
            <person name="Zaparucha A."/>
            <person name="Weissenbach J."/>
            <person name="Salanoubat M."/>
            <person name="de Berardinis V."/>
        </authorList>
    </citation>
    <scope>FUNCTION</scope>
    <scope>CATALYTIC ACTIVITY</scope>
</reference>
<sequence length="368" mass="41756">MKIETKIAKFTKPLYLESGRILEPWQIIYETYGELNEKKDNVILITHALSGSHHAAGMYEGDRKPGWWDGLIGDGKAIDTTKYFVISTNVIGSCFGSTSPMSPIHPGSSERYRLKFPVVTIKDMVKAQKILLDSLGIRHLKAIVGGSMGGMQALRFAVDFPGFCENIIPIATTYQTKPYVIAINKSMIEAIRADSEFKNGNYDPDIIKQNGLKGLAAARMIGYLNYISPKTFERKFGREYVKTDGMFELFGRFQVESYLEYNGAMFPKWFDPLSYIYILKAISLFDISRGFVSLEDAFSQIKDKLHLISFSGDTLFFPEEMRDIKNYMDKVGGKCNYFEINSDYGHDSFLVELEKFDFIISDILKGEV</sequence>
<evidence type="ECO:0000255" key="1">
    <source>
        <dbReference type="HAMAP-Rule" id="MF_00296"/>
    </source>
</evidence>
<evidence type="ECO:0000269" key="2">
    <source>
    </source>
</evidence>
<evidence type="ECO:0000303" key="3">
    <source>
    </source>
</evidence>
<evidence type="ECO:0000312" key="4">
    <source>
        <dbReference type="EMBL" id="ACM92473.1"/>
    </source>
</evidence>